<proteinExistence type="inferred from homology"/>
<reference key="1">
    <citation type="journal article" date="1997" name="J. Bacteriol.">
        <title>Complete genome sequence of Methanobacterium thermoautotrophicum deltaH: functional analysis and comparative genomics.</title>
        <authorList>
            <person name="Smith D.R."/>
            <person name="Doucette-Stamm L.A."/>
            <person name="Deloughery C."/>
            <person name="Lee H.-M."/>
            <person name="Dubois J."/>
            <person name="Aldredge T."/>
            <person name="Bashirzadeh R."/>
            <person name="Blakely D."/>
            <person name="Cook R."/>
            <person name="Gilbert K."/>
            <person name="Harrison D."/>
            <person name="Hoang L."/>
            <person name="Keagle P."/>
            <person name="Lumm W."/>
            <person name="Pothier B."/>
            <person name="Qiu D."/>
            <person name="Spadafora R."/>
            <person name="Vicare R."/>
            <person name="Wang Y."/>
            <person name="Wierzbowski J."/>
            <person name="Gibson R."/>
            <person name="Jiwani N."/>
            <person name="Caruso A."/>
            <person name="Bush D."/>
            <person name="Safer H."/>
            <person name="Patwell D."/>
            <person name="Prabhakar S."/>
            <person name="McDougall S."/>
            <person name="Shimer G."/>
            <person name="Goyal A."/>
            <person name="Pietrovski S."/>
            <person name="Church G.M."/>
            <person name="Daniels C.J."/>
            <person name="Mao J.-I."/>
            <person name="Rice P."/>
            <person name="Noelling J."/>
            <person name="Reeve J.N."/>
        </authorList>
    </citation>
    <scope>NUCLEOTIDE SEQUENCE [LARGE SCALE GENOMIC DNA]</scope>
    <source>
        <strain>ATCC 29096 / DSM 1053 / JCM 10044 / NBRC 100330 / Delta H</strain>
    </source>
</reference>
<evidence type="ECO:0000255" key="1">
    <source>
        <dbReference type="HAMAP-Rule" id="MF_00763"/>
    </source>
</evidence>
<evidence type="ECO:0000305" key="2"/>
<gene>
    <name type="ordered locus">MTH_812</name>
</gene>
<protein>
    <recommendedName>
        <fullName evidence="1">UPF0305 protein MTH_812</fullName>
    </recommendedName>
</protein>
<name>Y812_METTH</name>
<organism>
    <name type="scientific">Methanothermobacter thermautotrophicus (strain ATCC 29096 / DSM 1053 / JCM 10044 / NBRC 100330 / Delta H)</name>
    <name type="common">Methanobacterium thermoautotrophicum</name>
    <dbReference type="NCBI Taxonomy" id="187420"/>
    <lineage>
        <taxon>Archaea</taxon>
        <taxon>Methanobacteriati</taxon>
        <taxon>Methanobacteriota</taxon>
        <taxon>Methanomada group</taxon>
        <taxon>Methanobacteria</taxon>
        <taxon>Methanobacteriales</taxon>
        <taxon>Methanobacteriaceae</taxon>
        <taxon>Methanothermobacter</taxon>
    </lineage>
</organism>
<accession>O26903</accession>
<keyword id="KW-1185">Reference proteome</keyword>
<feature type="chain" id="PRO_0000141707" description="UPF0305 protein MTH_812">
    <location>
        <begin position="1"/>
        <end position="164"/>
    </location>
</feature>
<comment type="similarity">
    <text evidence="1">Belongs to the UPF0305 family.</text>
</comment>
<comment type="sequence caution" evidence="2">
    <conflict type="erroneous initiation">
        <sequence resource="EMBL-CDS" id="AAB85312"/>
    </conflict>
</comment>
<sequence>MTEMQLLEMLKKEASSVHIKDIMSASVYLREDARYLPPREQKEFIERFTRAFFNRIRDIKNDKNIYQGHVDTAGLKEFIDFLDQQLSQAKTENERCFQKIARIITIYVTFVRKEPVHPVGTRFPGGFTVRREGNVFYCPVKDRQINTPGALCRFCVSIQDHDIS</sequence>
<dbReference type="EMBL" id="AE000666">
    <property type="protein sequence ID" value="AAB85312.1"/>
    <property type="status" value="ALT_INIT"/>
    <property type="molecule type" value="Genomic_DNA"/>
</dbReference>
<dbReference type="PIR" id="E69208">
    <property type="entry name" value="E69208"/>
</dbReference>
<dbReference type="RefSeq" id="WP_010876447.1">
    <property type="nucleotide sequence ID" value="NC_000916.1"/>
</dbReference>
<dbReference type="SMR" id="O26903"/>
<dbReference type="FunCoup" id="O26903">
    <property type="interactions" value="1"/>
</dbReference>
<dbReference type="STRING" id="187420.MTH_812"/>
<dbReference type="PaxDb" id="187420-MTH_812"/>
<dbReference type="EnsemblBacteria" id="AAB85312">
    <property type="protein sequence ID" value="AAB85312"/>
    <property type="gene ID" value="MTH_812"/>
</dbReference>
<dbReference type="KEGG" id="mth:MTH_812"/>
<dbReference type="PATRIC" id="fig|187420.15.peg.797"/>
<dbReference type="HOGENOM" id="CLU_089549_1_0_2"/>
<dbReference type="InParanoid" id="O26903"/>
<dbReference type="Proteomes" id="UP000005223">
    <property type="component" value="Chromosome"/>
</dbReference>
<dbReference type="HAMAP" id="MF_00763">
    <property type="entry name" value="UPF0305"/>
    <property type="match status" value="1"/>
</dbReference>
<dbReference type="InterPro" id="IPR019215">
    <property type="entry name" value="DUF2115"/>
</dbReference>
<dbReference type="NCBIfam" id="NF002178">
    <property type="entry name" value="PRK01022.2-1"/>
    <property type="match status" value="1"/>
</dbReference>
<dbReference type="Pfam" id="PF09888">
    <property type="entry name" value="DUF2115"/>
    <property type="match status" value="1"/>
</dbReference>
<dbReference type="PIRSF" id="PIRSF004959">
    <property type="entry name" value="UCP004959"/>
    <property type="match status" value="1"/>
</dbReference>